<reference key="1">
    <citation type="journal article" date="2008" name="DNA Res.">
        <title>Complete genome sequence and comparative analysis of the wild-type commensal Escherichia coli strain SE11 isolated from a healthy adult.</title>
        <authorList>
            <person name="Oshima K."/>
            <person name="Toh H."/>
            <person name="Ogura Y."/>
            <person name="Sasamoto H."/>
            <person name="Morita H."/>
            <person name="Park S.-H."/>
            <person name="Ooka T."/>
            <person name="Iyoda S."/>
            <person name="Taylor T.D."/>
            <person name="Hayashi T."/>
            <person name="Itoh K."/>
            <person name="Hattori M."/>
        </authorList>
    </citation>
    <scope>NUCLEOTIDE SEQUENCE [LARGE SCALE GENOMIC DNA]</scope>
    <source>
        <strain>SE11</strain>
    </source>
</reference>
<organism>
    <name type="scientific">Escherichia coli (strain SE11)</name>
    <dbReference type="NCBI Taxonomy" id="409438"/>
    <lineage>
        <taxon>Bacteria</taxon>
        <taxon>Pseudomonadati</taxon>
        <taxon>Pseudomonadota</taxon>
        <taxon>Gammaproteobacteria</taxon>
        <taxon>Enterobacterales</taxon>
        <taxon>Enterobacteriaceae</taxon>
        <taxon>Escherichia</taxon>
    </lineage>
</organism>
<gene>
    <name evidence="1" type="primary">ssuD</name>
    <name type="ordered locus">ECSE_0996</name>
</gene>
<keyword id="KW-0285">Flavoprotein</keyword>
<keyword id="KW-0288">FMN</keyword>
<keyword id="KW-0503">Monooxygenase</keyword>
<keyword id="KW-0560">Oxidoreductase</keyword>
<protein>
    <recommendedName>
        <fullName evidence="1">Alkanesulfonate monooxygenase</fullName>
        <ecNumber evidence="1">1.14.14.5</ecNumber>
    </recommendedName>
    <alternativeName>
        <fullName evidence="1">FMNH2-dependent aliphatic sulfonate monooxygenase</fullName>
    </alternativeName>
</protein>
<sequence length="381" mass="41671">MSLNMFWFLPTHGDGHYLGTEEGSRPVDHGYLQQIAQAADRLGYTGVLIPTGRSCEDAWLVAASMIPVTQRLKFLVALRPSVTSPTVAARQAATLDRLSNGRALFNLVTGSDPQELAGDGVFLDHSERYEASAEFTQVWRRLLLGETVNFNGKHIHVRGAKLLFPPIQQPYPPLYFGGSSDVAQELAAEQVDLYLTWGEPPELVKEKIEQVRAKAAAHGRKIRFGIRLHVIVRETNDEAWQAAERLISHLDDETIAKAQAAFARTDSVGQQRMAALHNGKRDNLEISPNLWAGVGLVRGGAGTALVGDGPTVAARINEYAALGIDSFVLSGYPHLEEAYRVGELLFPHLDVAIPEIPQPQPLNPQGEAVANDFIPRKVAQS</sequence>
<proteinExistence type="inferred from homology"/>
<feature type="chain" id="PRO_1000139622" description="Alkanesulfonate monooxygenase">
    <location>
        <begin position="1"/>
        <end position="381"/>
    </location>
</feature>
<dbReference type="EC" id="1.14.14.5" evidence="1"/>
<dbReference type="EMBL" id="AP009240">
    <property type="protein sequence ID" value="BAG76520.1"/>
    <property type="molecule type" value="Genomic_DNA"/>
</dbReference>
<dbReference type="RefSeq" id="WP_000055996.1">
    <property type="nucleotide sequence ID" value="NC_011415.1"/>
</dbReference>
<dbReference type="SMR" id="B6I909"/>
<dbReference type="GeneID" id="75204026"/>
<dbReference type="KEGG" id="ecy:ECSE_0996"/>
<dbReference type="HOGENOM" id="CLU_027853_1_0_6"/>
<dbReference type="Proteomes" id="UP000008199">
    <property type="component" value="Chromosome"/>
</dbReference>
<dbReference type="GO" id="GO:0008726">
    <property type="term" value="F:alkanesulfonate monooxygenase activity"/>
    <property type="evidence" value="ECO:0007669"/>
    <property type="project" value="UniProtKB-UniRule"/>
</dbReference>
<dbReference type="GO" id="GO:0046306">
    <property type="term" value="P:alkanesulfonate catabolic process"/>
    <property type="evidence" value="ECO:0007669"/>
    <property type="project" value="TreeGrafter"/>
</dbReference>
<dbReference type="CDD" id="cd01094">
    <property type="entry name" value="Alkanesulfonate_monoxygenase"/>
    <property type="match status" value="1"/>
</dbReference>
<dbReference type="FunFam" id="3.20.20.30:FF:000001">
    <property type="entry name" value="Alkanesulfonate monooxygenase"/>
    <property type="match status" value="1"/>
</dbReference>
<dbReference type="Gene3D" id="3.20.20.30">
    <property type="entry name" value="Luciferase-like domain"/>
    <property type="match status" value="1"/>
</dbReference>
<dbReference type="HAMAP" id="MF_01229">
    <property type="entry name" value="Alkanesulf_monooxygen"/>
    <property type="match status" value="1"/>
</dbReference>
<dbReference type="InterPro" id="IPR019911">
    <property type="entry name" value="Alkanesulphonate_mOase_FMN-dep"/>
</dbReference>
<dbReference type="InterPro" id="IPR011251">
    <property type="entry name" value="Luciferase-like_dom"/>
</dbReference>
<dbReference type="InterPro" id="IPR036661">
    <property type="entry name" value="Luciferase-like_sf"/>
</dbReference>
<dbReference type="InterPro" id="IPR050172">
    <property type="entry name" value="SsuD_RutA_monooxygenase"/>
</dbReference>
<dbReference type="NCBIfam" id="TIGR03565">
    <property type="entry name" value="alk_sulf_monoox"/>
    <property type="match status" value="1"/>
</dbReference>
<dbReference type="NCBIfam" id="NF001939">
    <property type="entry name" value="PRK00719.1"/>
    <property type="match status" value="1"/>
</dbReference>
<dbReference type="PANTHER" id="PTHR42847">
    <property type="entry name" value="ALKANESULFONATE MONOOXYGENASE"/>
    <property type="match status" value="1"/>
</dbReference>
<dbReference type="PANTHER" id="PTHR42847:SF4">
    <property type="entry name" value="ALKANESULFONATE MONOOXYGENASE-RELATED"/>
    <property type="match status" value="1"/>
</dbReference>
<dbReference type="Pfam" id="PF00296">
    <property type="entry name" value="Bac_luciferase"/>
    <property type="match status" value="1"/>
</dbReference>
<dbReference type="SUPFAM" id="SSF51679">
    <property type="entry name" value="Bacterial luciferase-like"/>
    <property type="match status" value="1"/>
</dbReference>
<name>SSUD_ECOSE</name>
<evidence type="ECO:0000255" key="1">
    <source>
        <dbReference type="HAMAP-Rule" id="MF_01229"/>
    </source>
</evidence>
<comment type="function">
    <text evidence="1">Catalyzes the desulfonation of aliphatic sulfonates.</text>
</comment>
<comment type="catalytic activity">
    <reaction evidence="1">
        <text>an alkanesulfonate + FMNH2 + O2 = an aldehyde + FMN + sulfite + H2O + 2 H(+)</text>
        <dbReference type="Rhea" id="RHEA:23064"/>
        <dbReference type="ChEBI" id="CHEBI:15377"/>
        <dbReference type="ChEBI" id="CHEBI:15378"/>
        <dbReference type="ChEBI" id="CHEBI:15379"/>
        <dbReference type="ChEBI" id="CHEBI:17359"/>
        <dbReference type="ChEBI" id="CHEBI:17478"/>
        <dbReference type="ChEBI" id="CHEBI:57618"/>
        <dbReference type="ChEBI" id="CHEBI:58210"/>
        <dbReference type="ChEBI" id="CHEBI:134249"/>
        <dbReference type="EC" id="1.14.14.5"/>
    </reaction>
</comment>
<comment type="subunit">
    <text evidence="1">Homotetramer.</text>
</comment>
<comment type="miscellaneous">
    <text evidence="1">FMNH(2) which is absolutely required for this enzymatic reaction, is provided by SsuE.</text>
</comment>
<comment type="similarity">
    <text evidence="1">Belongs to the SsuD family.</text>
</comment>
<accession>B6I909</accession>